<dbReference type="EMBL" id="X01714">
    <property type="protein sequence ID" value="CAA25860.1"/>
    <property type="molecule type" value="Genomic_DNA"/>
</dbReference>
<dbReference type="EMBL" id="V01578">
    <property type="protein sequence ID" value="CAA24898.1"/>
    <property type="molecule type" value="Genomic_DNA"/>
</dbReference>
<dbReference type="EMBL" id="V01498">
    <property type="status" value="NOT_ANNOTATED_CDS"/>
    <property type="molecule type" value="Genomic_DNA"/>
</dbReference>
<dbReference type="EMBL" id="L10328">
    <property type="protein sequence ID" value="AAA61994.1"/>
    <property type="status" value="ALT_INIT"/>
    <property type="molecule type" value="Genomic_DNA"/>
</dbReference>
<dbReference type="EMBL" id="U00096">
    <property type="protein sequence ID" value="AAC76665.2"/>
    <property type="molecule type" value="Genomic_DNA"/>
</dbReference>
<dbReference type="EMBL" id="AP009048">
    <property type="protein sequence ID" value="BAE77651.1"/>
    <property type="molecule type" value="Genomic_DNA"/>
</dbReference>
<dbReference type="RefSeq" id="NP_418098.4">
    <property type="nucleotide sequence ID" value="NC_000913.3"/>
</dbReference>
<dbReference type="RefSeq" id="WP_000818601.1">
    <property type="nucleotide sequence ID" value="NZ_STEB01000024.1"/>
</dbReference>
<dbReference type="PDB" id="3NXC">
    <property type="method" value="X-ray"/>
    <property type="resolution" value="2.50 A"/>
    <property type="chains" value="A=1-198"/>
</dbReference>
<dbReference type="PDB" id="5HBU">
    <property type="method" value="X-ray"/>
    <property type="resolution" value="2.60 A"/>
    <property type="chains" value="A/B/C/D/E/F/G/H=7-198"/>
</dbReference>
<dbReference type="PDB" id="5K58">
    <property type="method" value="X-ray"/>
    <property type="resolution" value="2.77 A"/>
    <property type="chains" value="A/B/E/F=9-198"/>
</dbReference>
<dbReference type="PDBsum" id="3NXC"/>
<dbReference type="PDBsum" id="5HBU"/>
<dbReference type="PDBsum" id="5K58"/>
<dbReference type="SMR" id="P0C093"/>
<dbReference type="BioGRID" id="4259414">
    <property type="interactions" value="444"/>
</dbReference>
<dbReference type="FunCoup" id="P0C093">
    <property type="interactions" value="29"/>
</dbReference>
<dbReference type="IntAct" id="P0C093">
    <property type="interactions" value="1"/>
</dbReference>
<dbReference type="MINT" id="P0C093"/>
<dbReference type="STRING" id="511145.b3641"/>
<dbReference type="jPOST" id="P0C093"/>
<dbReference type="PaxDb" id="511145-b3641"/>
<dbReference type="EnsemblBacteria" id="AAC76665">
    <property type="protein sequence ID" value="AAC76665"/>
    <property type="gene ID" value="b3641"/>
</dbReference>
<dbReference type="GeneID" id="93778356"/>
<dbReference type="GeneID" id="948158"/>
<dbReference type="KEGG" id="ecj:JW5641"/>
<dbReference type="KEGG" id="eco:b3641"/>
<dbReference type="KEGG" id="ecoc:C3026_19730"/>
<dbReference type="PATRIC" id="fig|1411691.4.peg.3065"/>
<dbReference type="EchoBASE" id="EB1177"/>
<dbReference type="eggNOG" id="COG1309">
    <property type="taxonomic scope" value="Bacteria"/>
</dbReference>
<dbReference type="HOGENOM" id="CLU_069356_5_0_6"/>
<dbReference type="InParanoid" id="P0C093"/>
<dbReference type="OMA" id="KMYEGLI"/>
<dbReference type="OrthoDB" id="9179041at2"/>
<dbReference type="PhylomeDB" id="P0C093"/>
<dbReference type="BioCyc" id="EcoCyc:EG11191-MONOMER"/>
<dbReference type="CD-CODE" id="7BA5F8B6">
    <property type="entry name" value="Synthetic Condensate 000223"/>
</dbReference>
<dbReference type="CD-CODE" id="86211E4F">
    <property type="entry name" value="Synthetic Condensate 000220"/>
</dbReference>
<dbReference type="CD-CODE" id="D447D79E">
    <property type="entry name" value="FtsZ/SlmA body"/>
</dbReference>
<dbReference type="EvolutionaryTrace" id="P0C093"/>
<dbReference type="PRO" id="PR:P0C093"/>
<dbReference type="Proteomes" id="UP000000625">
    <property type="component" value="Chromosome"/>
</dbReference>
<dbReference type="GO" id="GO:0043590">
    <property type="term" value="C:bacterial nucleoid"/>
    <property type="evidence" value="ECO:0000314"/>
    <property type="project" value="EcoCyc"/>
</dbReference>
<dbReference type="GO" id="GO:0005737">
    <property type="term" value="C:cytoplasm"/>
    <property type="evidence" value="ECO:0007669"/>
    <property type="project" value="UniProtKB-UniRule"/>
</dbReference>
<dbReference type="GO" id="GO:0003677">
    <property type="term" value="F:DNA binding"/>
    <property type="evidence" value="ECO:0000314"/>
    <property type="project" value="EcoliWiki"/>
</dbReference>
<dbReference type="GO" id="GO:0003700">
    <property type="term" value="F:DNA-binding transcription factor activity"/>
    <property type="evidence" value="ECO:0000318"/>
    <property type="project" value="GO_Central"/>
</dbReference>
<dbReference type="GO" id="GO:0042802">
    <property type="term" value="F:identical protein binding"/>
    <property type="evidence" value="ECO:0000353"/>
    <property type="project" value="IntAct"/>
</dbReference>
<dbReference type="GO" id="GO:0042803">
    <property type="term" value="F:protein homodimerization activity"/>
    <property type="evidence" value="ECO:0000314"/>
    <property type="project" value="EcoCyc"/>
</dbReference>
<dbReference type="GO" id="GO:0043565">
    <property type="term" value="F:sequence-specific DNA binding"/>
    <property type="evidence" value="ECO:0000314"/>
    <property type="project" value="EcoCyc"/>
</dbReference>
<dbReference type="GO" id="GO:0000976">
    <property type="term" value="F:transcription cis-regulatory region binding"/>
    <property type="evidence" value="ECO:0000318"/>
    <property type="project" value="GO_Central"/>
</dbReference>
<dbReference type="GO" id="GO:0000918">
    <property type="term" value="P:division septum site selection"/>
    <property type="evidence" value="ECO:0000315"/>
    <property type="project" value="EcoliWiki"/>
</dbReference>
<dbReference type="GO" id="GO:0010974">
    <property type="term" value="P:negative regulation of division septum assembly"/>
    <property type="evidence" value="ECO:0000314"/>
    <property type="project" value="EcoliWiki"/>
</dbReference>
<dbReference type="GO" id="GO:0032272">
    <property type="term" value="P:negative regulation of protein polymerization"/>
    <property type="evidence" value="ECO:0000314"/>
    <property type="project" value="EcoCyc"/>
</dbReference>
<dbReference type="GO" id="GO:0006355">
    <property type="term" value="P:regulation of DNA-templated transcription"/>
    <property type="evidence" value="ECO:0000318"/>
    <property type="project" value="GO_Central"/>
</dbReference>
<dbReference type="FunFam" id="1.10.357.10:FF:000002">
    <property type="entry name" value="Nucleoid occlusion factor SlmA"/>
    <property type="match status" value="1"/>
</dbReference>
<dbReference type="Gene3D" id="1.10.357.10">
    <property type="entry name" value="Tetracycline Repressor, domain 2"/>
    <property type="match status" value="1"/>
</dbReference>
<dbReference type="HAMAP" id="MF_01839">
    <property type="entry name" value="NO_factor_SlmA"/>
    <property type="match status" value="1"/>
</dbReference>
<dbReference type="InterPro" id="IPR023772">
    <property type="entry name" value="DNA-bd_HTH_TetR-type_CS"/>
</dbReference>
<dbReference type="InterPro" id="IPR009057">
    <property type="entry name" value="Homeodomain-like_sf"/>
</dbReference>
<dbReference type="InterPro" id="IPR050109">
    <property type="entry name" value="HTH-type_TetR-like_transc_reg"/>
</dbReference>
<dbReference type="InterPro" id="IPR001647">
    <property type="entry name" value="HTH_TetR"/>
</dbReference>
<dbReference type="InterPro" id="IPR023769">
    <property type="entry name" value="NO_SlmA"/>
</dbReference>
<dbReference type="InterPro" id="IPR054580">
    <property type="entry name" value="SlmA-like_C"/>
</dbReference>
<dbReference type="InterPro" id="IPR036271">
    <property type="entry name" value="Tet_transcr_reg_TetR-rel_C_sf"/>
</dbReference>
<dbReference type="NCBIfam" id="NF007015">
    <property type="entry name" value="PRK09480.1"/>
    <property type="match status" value="1"/>
</dbReference>
<dbReference type="PANTHER" id="PTHR30055">
    <property type="entry name" value="HTH-TYPE TRANSCRIPTIONAL REGULATOR RUTR"/>
    <property type="match status" value="1"/>
</dbReference>
<dbReference type="PANTHER" id="PTHR30055:SF183">
    <property type="entry name" value="NUCLEOID OCCLUSION FACTOR SLMA"/>
    <property type="match status" value="1"/>
</dbReference>
<dbReference type="Pfam" id="PF22276">
    <property type="entry name" value="SlmA-like_C"/>
    <property type="match status" value="1"/>
</dbReference>
<dbReference type="Pfam" id="PF00440">
    <property type="entry name" value="TetR_N"/>
    <property type="match status" value="1"/>
</dbReference>
<dbReference type="SUPFAM" id="SSF46689">
    <property type="entry name" value="Homeodomain-like"/>
    <property type="match status" value="1"/>
</dbReference>
<dbReference type="SUPFAM" id="SSF48498">
    <property type="entry name" value="Tetracyclin repressor-like, C-terminal domain"/>
    <property type="match status" value="1"/>
</dbReference>
<dbReference type="PROSITE" id="PS01081">
    <property type="entry name" value="HTH_TETR_1"/>
    <property type="match status" value="1"/>
</dbReference>
<dbReference type="PROSITE" id="PS50977">
    <property type="entry name" value="HTH_TETR_2"/>
    <property type="match status" value="1"/>
</dbReference>
<feature type="chain" id="PRO_0000198966" description="Nucleoid occlusion factor SlmA">
    <location>
        <begin position="1"/>
        <end position="198"/>
    </location>
</feature>
<feature type="domain" description="HTH tetR-type" evidence="1">
    <location>
        <begin position="10"/>
        <end position="70"/>
    </location>
</feature>
<feature type="DNA-binding region" description="H-T-H motif" evidence="1">
    <location>
        <begin position="33"/>
        <end position="52"/>
    </location>
</feature>
<feature type="coiled-coil region" evidence="1">
    <location>
        <begin position="117"/>
        <end position="144"/>
    </location>
</feature>
<feature type="mutagenesis site" description="Does not associate with DNA, but can inhibit division when overproduced." evidence="4">
    <original>T</original>
    <variation>A</variation>
    <location>
        <position position="33"/>
    </location>
</feature>
<feature type="mutagenesis site" description="Loss of activity. Binds DNA, but does not associate with FtsZ polymers." evidence="4">
    <original>R</original>
    <variation>D</variation>
    <location>
        <position position="73"/>
    </location>
</feature>
<feature type="sequence conflict" description="In Ref. 1; CAA25860." evidence="5" ref="1">
    <original>QLQ</original>
    <variation>SCSNMTPDDFSSGEFL</variation>
    <location>
        <begin position="196"/>
        <end position="198"/>
    </location>
</feature>
<feature type="helix" evidence="6">
    <location>
        <begin position="12"/>
        <end position="24"/>
    </location>
</feature>
<feature type="helix" evidence="7">
    <location>
        <begin position="26"/>
        <end position="29"/>
    </location>
</feature>
<feature type="helix" evidence="6">
    <location>
        <begin position="34"/>
        <end position="40"/>
    </location>
</feature>
<feature type="helix" evidence="6">
    <location>
        <begin position="45"/>
        <end position="49"/>
    </location>
</feature>
<feature type="helix" evidence="6">
    <location>
        <begin position="55"/>
        <end position="80"/>
    </location>
</feature>
<feature type="helix" evidence="6">
    <location>
        <begin position="84"/>
        <end position="101"/>
    </location>
</feature>
<feature type="helix" evidence="6">
    <location>
        <begin position="103"/>
        <end position="109"/>
    </location>
</feature>
<feature type="strand" evidence="7">
    <location>
        <begin position="115"/>
        <end position="117"/>
    </location>
</feature>
<feature type="helix" evidence="6">
    <location>
        <begin position="122"/>
        <end position="141"/>
    </location>
</feature>
<feature type="turn" evidence="6">
    <location>
        <begin position="142"/>
        <end position="146"/>
    </location>
</feature>
<feature type="helix" evidence="6">
    <location>
        <begin position="155"/>
        <end position="174"/>
    </location>
</feature>
<feature type="turn" evidence="6">
    <location>
        <begin position="175"/>
        <end position="178"/>
    </location>
</feature>
<feature type="turn" evidence="6">
    <location>
        <begin position="182"/>
        <end position="185"/>
    </location>
</feature>
<feature type="helix" evidence="6">
    <location>
        <begin position="186"/>
        <end position="194"/>
    </location>
</feature>
<keyword id="KW-0002">3D-structure</keyword>
<keyword id="KW-0131">Cell cycle</keyword>
<keyword id="KW-0132">Cell division</keyword>
<keyword id="KW-0175">Coiled coil</keyword>
<keyword id="KW-0963">Cytoplasm</keyword>
<keyword id="KW-0238">DNA-binding</keyword>
<keyword id="KW-1185">Reference proteome</keyword>
<protein>
    <recommendedName>
        <fullName evidence="1">Nucleoid occlusion factor SlmA</fullName>
    </recommendedName>
    <alternativeName>
        <fullName>Protein Ttk</fullName>
    </alternativeName>
    <alternativeName>
        <fullName>Synthetically lethal with a defective Min system protein A</fullName>
    </alternativeName>
</protein>
<name>SLMA_ECOLI</name>
<comment type="function">
    <text evidence="1 2 3 4">Required for nucleoid occlusion (NO) phenomenon, which prevents Z-ring formation and cell division over the nucleoid. Acts as a DNA-associated cell division inhibitor that binds simultaneously chromosomal DNA and FtsZ, and disrupts the assembly of FtsZ polymers. SlmA-DNA-binding sequences (SBS) are dispersed on non-Ter regions of the chromosome, preventing FtsZ polymerization at these regions.</text>
</comment>
<comment type="subunit">
    <text evidence="1 2 3 4">Homodimer. Interacts with FtsZ.</text>
</comment>
<comment type="interaction">
    <interactant intactId="EBI-8520580">
        <id>P0C093</id>
    </interactant>
    <interactant intactId="EBI-8520580">
        <id>P0C093</id>
        <label>slmA</label>
    </interactant>
    <organismsDiffer>false</organismsDiffer>
    <experiments>2</experiments>
</comment>
<comment type="subcellular location">
    <subcellularLocation>
        <location evidence="1 2">Cytoplasm</location>
        <location evidence="1 2">Nucleoid</location>
    </subcellularLocation>
</comment>
<comment type="miscellaneous">
    <text>Inhibitory activity is enhanced by sequence-specific DNA binding.</text>
</comment>
<comment type="similarity">
    <text evidence="1">Belongs to the nucleoid occlusion factor SlmA family.</text>
</comment>
<comment type="sequence caution" evidence="5">
    <conflict type="erroneous initiation">
        <sequence resource="EMBL-CDS" id="AAA61994"/>
    </conflict>
    <text>Extended N-terminus.</text>
</comment>
<proteinExistence type="evidence at protein level"/>
<accession>P0C093</accession>
<accession>P06969</accession>
<accession>Q2M7V5</accession>
<organism>
    <name type="scientific">Escherichia coli (strain K12)</name>
    <dbReference type="NCBI Taxonomy" id="83333"/>
    <lineage>
        <taxon>Bacteria</taxon>
        <taxon>Pseudomonadati</taxon>
        <taxon>Pseudomonadota</taxon>
        <taxon>Gammaproteobacteria</taxon>
        <taxon>Enterobacterales</taxon>
        <taxon>Enterobacteriaceae</taxon>
        <taxon>Escherichia</taxon>
    </lineage>
</organism>
<sequence length="198" mass="22836">MAEKQTAKRNRREEILQSLALMLESSDGSQRITTAKLAASVGVSEAALYRHFPSKTRMFDSLIEFIEDSLITRINLILKDEKDTTARLRLIVLLLLGFGERNPGLTRILTGHALMFEQDRLQGRINQLFERIEAQLRQVLREKRMREGEGYTTDETLLASQILAFCEGMLSRFVRSEFKYRPTDDFDARWPLIAAQLQ</sequence>
<reference key="1">
    <citation type="journal article" date="1983" name="EMBO J.">
        <title>Nucleotide sequence of the structural gene for dUTPase of Escherichia coli K-12.</title>
        <authorList>
            <person name="Lundberg L.G."/>
            <person name="Thoresson H.-O."/>
            <person name="Karlstroem O.H."/>
            <person name="Nyman P.O."/>
        </authorList>
    </citation>
    <scope>NUCLEOTIDE SEQUENCE [GENOMIC DNA]</scope>
    <source>
        <strain>K12</strain>
    </source>
</reference>
<reference key="2">
    <citation type="journal article" date="1993" name="Genomics">
        <title>DNA sequence and analysis of 136 kilobases of the Escherichia coli genome: organizational symmetry around the origin of replication.</title>
        <authorList>
            <person name="Burland V.D."/>
            <person name="Plunkett G. III"/>
            <person name="Daniels D.L."/>
            <person name="Blattner F.R."/>
        </authorList>
    </citation>
    <scope>NUCLEOTIDE SEQUENCE [LARGE SCALE GENOMIC DNA]</scope>
    <source>
        <strain>K12 / MG1655 / ATCC 47076</strain>
    </source>
</reference>
<reference key="3">
    <citation type="journal article" date="1997" name="Science">
        <title>The complete genome sequence of Escherichia coli K-12.</title>
        <authorList>
            <person name="Blattner F.R."/>
            <person name="Plunkett G. III"/>
            <person name="Bloch C.A."/>
            <person name="Perna N.T."/>
            <person name="Burland V."/>
            <person name="Riley M."/>
            <person name="Collado-Vides J."/>
            <person name="Glasner J.D."/>
            <person name="Rode C.K."/>
            <person name="Mayhew G.F."/>
            <person name="Gregor J."/>
            <person name="Davis N.W."/>
            <person name="Kirkpatrick H.A."/>
            <person name="Goeden M.A."/>
            <person name="Rose D.J."/>
            <person name="Mau B."/>
            <person name="Shao Y."/>
        </authorList>
    </citation>
    <scope>NUCLEOTIDE SEQUENCE [LARGE SCALE GENOMIC DNA]</scope>
    <source>
        <strain>K12 / MG1655 / ATCC 47076</strain>
    </source>
</reference>
<reference key="4">
    <citation type="journal article" date="2006" name="Mol. Syst. Biol.">
        <title>Highly accurate genome sequences of Escherichia coli K-12 strains MG1655 and W3110.</title>
        <authorList>
            <person name="Hayashi K."/>
            <person name="Morooka N."/>
            <person name="Yamamoto Y."/>
            <person name="Fujita K."/>
            <person name="Isono K."/>
            <person name="Choi S."/>
            <person name="Ohtsubo E."/>
            <person name="Baba T."/>
            <person name="Wanner B.L."/>
            <person name="Mori H."/>
            <person name="Horiuchi T."/>
        </authorList>
    </citation>
    <scope>NUCLEOTIDE SEQUENCE [LARGE SCALE GENOMIC DNA]</scope>
    <source>
        <strain>K12 / W3110 / ATCC 27325 / DSM 5911</strain>
    </source>
</reference>
<reference key="5">
    <citation type="journal article" date="1988" name="J. Bacteriol.">
        <title>Lethality of a dut (deoxyuridine triphosphatase) mutation in Escherichia coli.</title>
        <authorList>
            <person name="El-Hajj H.H."/>
            <person name="Zhang H."/>
            <person name="Weiss B."/>
        </authorList>
    </citation>
    <scope>GENE NAME</scope>
</reference>
<reference key="6">
    <citation type="journal article" date="2005" name="Mol. Cell">
        <title>SlmA, a nucleoid-associated, ftsZ binding protein required for blocking septal ring assembly over chromosomes in E. coli.</title>
        <authorList>
            <person name="Bernhardt T.G."/>
            <person name="de Boer P.A.J."/>
        </authorList>
    </citation>
    <scope>FUNCTION</scope>
    <scope>SUBCELLULAR LOCATION</scope>
    <scope>INTERACTION WITH FTSZ</scope>
</reference>
<reference key="7">
    <citation type="journal article" date="2011" name="Proc. Natl. Acad. Sci. U.S.A.">
        <title>Nucleoid occlusion factor SlmA is a DNA-activated FtsZ polymerization antagonist.</title>
        <authorList>
            <person name="Cho H."/>
            <person name="McManus H.R."/>
            <person name="Dove S.L."/>
            <person name="Bernhardt T.G."/>
        </authorList>
    </citation>
    <scope>FUNCTION</scope>
    <scope>DNA-BINDING</scope>
    <scope>INTERACTION WITH FTSZ</scope>
    <scope>REGULATION OF ACTIVITY</scope>
    <scope>MUTAGENESIS OF THR-33 AND ARG-73</scope>
</reference>
<reference key="8">
    <citation type="journal article" date="2011" name="EMBO J.">
        <title>Molecular mechanism by which the nucleoid occlusion factor, SlmA, keeps cytokinesis in check.</title>
        <authorList>
            <person name="Tonthat N.K."/>
            <person name="Arold S.T."/>
            <person name="Pickering B.F."/>
            <person name="Van Dyke M.W."/>
            <person name="Liang S."/>
            <person name="Lu Y."/>
            <person name="Beuria T.K."/>
            <person name="Margolin W."/>
            <person name="Schumacher M.A."/>
        </authorList>
    </citation>
    <scope>X-RAY CRYSTALLOGRAPHY (2.5 ANGSTROMS)</scope>
    <scope>FUNCTION</scope>
    <scope>DNA-BINDING</scope>
    <scope>SUBUNIT</scope>
    <scope>INTERACTION WITH FTSZ</scope>
</reference>
<evidence type="ECO:0000255" key="1">
    <source>
        <dbReference type="HAMAP-Rule" id="MF_01839"/>
    </source>
</evidence>
<evidence type="ECO:0000269" key="2">
    <source>
    </source>
</evidence>
<evidence type="ECO:0000269" key="3">
    <source>
    </source>
</evidence>
<evidence type="ECO:0000269" key="4">
    <source>
    </source>
</evidence>
<evidence type="ECO:0000305" key="5"/>
<evidence type="ECO:0007829" key="6">
    <source>
        <dbReference type="PDB" id="3NXC"/>
    </source>
</evidence>
<evidence type="ECO:0007829" key="7">
    <source>
        <dbReference type="PDB" id="5HBU"/>
    </source>
</evidence>
<gene>
    <name evidence="1" type="primary">slmA</name>
    <name type="synonym">ttk</name>
    <name type="synonym">yicB</name>
    <name type="ordered locus">b3641</name>
    <name type="ordered locus">JW5641</name>
</gene>